<accession>A2C9M6</accession>
<evidence type="ECO:0000255" key="1">
    <source>
        <dbReference type="HAMAP-Rule" id="MF_00182"/>
    </source>
</evidence>
<sequence>MLFWGTPSYAVPTLDALNDSGYEIVGVVSQPDRRRGRGNQQMASPVKQRAMDQGLRVFTPERIRDEGNVQAELKSLKADISVVVAFGQLLPSTVLNQPPLGCWNGHASLLPRWRGAGPIQWSLLSGDSVTGVGIMAMEEGLDTGPVLANQRVSIGLLENANQLSNRLSSITAKLFLESIPRIAAAGPGVESERWKQLEVIKQEEIGGDPTYARMLSKKDHILDWNQSAMDLHRRVMGLYPNAFSSWNNKRLKVQATEPLDEELKSKLSERVRPLLGRWQDGEHEPGKILACESDLGLVVSTKTCPLLIRQGQLEGKSKALGEVLIQQLQATVGQNLGVVCNI</sequence>
<reference key="1">
    <citation type="journal article" date="2007" name="PLoS Genet.">
        <title>Patterns and implications of gene gain and loss in the evolution of Prochlorococcus.</title>
        <authorList>
            <person name="Kettler G.C."/>
            <person name="Martiny A.C."/>
            <person name="Huang K."/>
            <person name="Zucker J."/>
            <person name="Coleman M.L."/>
            <person name="Rodrigue S."/>
            <person name="Chen F."/>
            <person name="Lapidus A."/>
            <person name="Ferriera S."/>
            <person name="Johnson J."/>
            <person name="Steglich C."/>
            <person name="Church G.M."/>
            <person name="Richardson P."/>
            <person name="Chisholm S.W."/>
        </authorList>
    </citation>
    <scope>NUCLEOTIDE SEQUENCE [LARGE SCALE GENOMIC DNA]</scope>
    <source>
        <strain>MIT 9303</strain>
    </source>
</reference>
<name>FMT_PROM3</name>
<comment type="function">
    <text evidence="1">Attaches a formyl group to the free amino group of methionyl-tRNA(fMet). The formyl group appears to play a dual role in the initiator identity of N-formylmethionyl-tRNA by promoting its recognition by IF2 and preventing the misappropriation of this tRNA by the elongation apparatus.</text>
</comment>
<comment type="catalytic activity">
    <reaction evidence="1">
        <text>L-methionyl-tRNA(fMet) + (6R)-10-formyltetrahydrofolate = N-formyl-L-methionyl-tRNA(fMet) + (6S)-5,6,7,8-tetrahydrofolate + H(+)</text>
        <dbReference type="Rhea" id="RHEA:24380"/>
        <dbReference type="Rhea" id="RHEA-COMP:9952"/>
        <dbReference type="Rhea" id="RHEA-COMP:9953"/>
        <dbReference type="ChEBI" id="CHEBI:15378"/>
        <dbReference type="ChEBI" id="CHEBI:57453"/>
        <dbReference type="ChEBI" id="CHEBI:78530"/>
        <dbReference type="ChEBI" id="CHEBI:78844"/>
        <dbReference type="ChEBI" id="CHEBI:195366"/>
        <dbReference type="EC" id="2.1.2.9"/>
    </reaction>
</comment>
<comment type="similarity">
    <text evidence="1">Belongs to the Fmt family.</text>
</comment>
<protein>
    <recommendedName>
        <fullName evidence="1">Methionyl-tRNA formyltransferase</fullName>
        <ecNumber evidence="1">2.1.2.9</ecNumber>
    </recommendedName>
</protein>
<keyword id="KW-0648">Protein biosynthesis</keyword>
<keyword id="KW-0808">Transferase</keyword>
<organism>
    <name type="scientific">Prochlorococcus marinus (strain MIT 9303)</name>
    <dbReference type="NCBI Taxonomy" id="59922"/>
    <lineage>
        <taxon>Bacteria</taxon>
        <taxon>Bacillati</taxon>
        <taxon>Cyanobacteriota</taxon>
        <taxon>Cyanophyceae</taxon>
        <taxon>Synechococcales</taxon>
        <taxon>Prochlorococcaceae</taxon>
        <taxon>Prochlorococcus</taxon>
    </lineage>
</organism>
<gene>
    <name evidence="1" type="primary">fmt</name>
    <name type="ordered locus">P9303_14401</name>
</gene>
<dbReference type="EC" id="2.1.2.9" evidence="1"/>
<dbReference type="EMBL" id="CP000554">
    <property type="protein sequence ID" value="ABM78186.1"/>
    <property type="molecule type" value="Genomic_DNA"/>
</dbReference>
<dbReference type="RefSeq" id="WP_011826083.1">
    <property type="nucleotide sequence ID" value="NC_008820.1"/>
</dbReference>
<dbReference type="SMR" id="A2C9M6"/>
<dbReference type="STRING" id="59922.P9303_14401"/>
<dbReference type="KEGG" id="pmf:P9303_14401"/>
<dbReference type="HOGENOM" id="CLU_033347_1_1_3"/>
<dbReference type="Proteomes" id="UP000002274">
    <property type="component" value="Chromosome"/>
</dbReference>
<dbReference type="GO" id="GO:0005829">
    <property type="term" value="C:cytosol"/>
    <property type="evidence" value="ECO:0007669"/>
    <property type="project" value="TreeGrafter"/>
</dbReference>
<dbReference type="GO" id="GO:0004479">
    <property type="term" value="F:methionyl-tRNA formyltransferase activity"/>
    <property type="evidence" value="ECO:0007669"/>
    <property type="project" value="UniProtKB-UniRule"/>
</dbReference>
<dbReference type="CDD" id="cd08646">
    <property type="entry name" value="FMT_core_Met-tRNA-FMT_N"/>
    <property type="match status" value="1"/>
</dbReference>
<dbReference type="CDD" id="cd08704">
    <property type="entry name" value="Met_tRNA_FMT_C"/>
    <property type="match status" value="1"/>
</dbReference>
<dbReference type="Gene3D" id="3.40.50.12230">
    <property type="match status" value="1"/>
</dbReference>
<dbReference type="HAMAP" id="MF_00182">
    <property type="entry name" value="Formyl_trans"/>
    <property type="match status" value="1"/>
</dbReference>
<dbReference type="InterPro" id="IPR005794">
    <property type="entry name" value="Fmt"/>
</dbReference>
<dbReference type="InterPro" id="IPR005793">
    <property type="entry name" value="Formyl_trans_C"/>
</dbReference>
<dbReference type="InterPro" id="IPR002376">
    <property type="entry name" value="Formyl_transf_N"/>
</dbReference>
<dbReference type="InterPro" id="IPR036477">
    <property type="entry name" value="Formyl_transf_N_sf"/>
</dbReference>
<dbReference type="InterPro" id="IPR011034">
    <property type="entry name" value="Formyl_transferase-like_C_sf"/>
</dbReference>
<dbReference type="InterPro" id="IPR044135">
    <property type="entry name" value="Met-tRNA-FMT_C"/>
</dbReference>
<dbReference type="InterPro" id="IPR041711">
    <property type="entry name" value="Met-tRNA-FMT_N"/>
</dbReference>
<dbReference type="NCBIfam" id="TIGR00460">
    <property type="entry name" value="fmt"/>
    <property type="match status" value="1"/>
</dbReference>
<dbReference type="PANTHER" id="PTHR11138">
    <property type="entry name" value="METHIONYL-TRNA FORMYLTRANSFERASE"/>
    <property type="match status" value="1"/>
</dbReference>
<dbReference type="PANTHER" id="PTHR11138:SF5">
    <property type="entry name" value="METHIONYL-TRNA FORMYLTRANSFERASE, MITOCHONDRIAL"/>
    <property type="match status" value="1"/>
</dbReference>
<dbReference type="Pfam" id="PF02911">
    <property type="entry name" value="Formyl_trans_C"/>
    <property type="match status" value="1"/>
</dbReference>
<dbReference type="Pfam" id="PF00551">
    <property type="entry name" value="Formyl_trans_N"/>
    <property type="match status" value="1"/>
</dbReference>
<dbReference type="SUPFAM" id="SSF50486">
    <property type="entry name" value="FMT C-terminal domain-like"/>
    <property type="match status" value="1"/>
</dbReference>
<dbReference type="SUPFAM" id="SSF53328">
    <property type="entry name" value="Formyltransferase"/>
    <property type="match status" value="1"/>
</dbReference>
<proteinExistence type="inferred from homology"/>
<feature type="chain" id="PRO_1000203871" description="Methionyl-tRNA formyltransferase">
    <location>
        <begin position="1"/>
        <end position="342"/>
    </location>
</feature>
<feature type="binding site" evidence="1">
    <location>
        <begin position="108"/>
        <end position="111"/>
    </location>
    <ligand>
        <name>(6S)-5,6,7,8-tetrahydrofolate</name>
        <dbReference type="ChEBI" id="CHEBI:57453"/>
    </ligand>
</feature>